<evidence type="ECO:0000255" key="1">
    <source>
        <dbReference type="HAMAP-Rule" id="MF_00201"/>
    </source>
</evidence>
<protein>
    <recommendedName>
        <fullName evidence="1">DNA repair protein RecO</fullName>
    </recommendedName>
    <alternativeName>
        <fullName evidence="1">Recombination protein O</fullName>
    </alternativeName>
</protein>
<proteinExistence type="inferred from homology"/>
<sequence>MSLFRDDGIVLRTQKLGEADRIITILTRGHGRVRAVARGVRRTKSKFGARLEPFSHVDVQFFARGGELVGRGLPLCTQSETIAPYGGGIVADYARYTAGTAMLETAERFTDHEGEPAVQQYLLLVGGLRTLARGEHAPHLILDAFLLRSLAVNGYAPSFEDCAKCGMPGPNRFFSVAAGGVICGDCRVPGSVVPSAQALTLLSALLSGDWATADACEARHVREGSGLVSAYLHWHLERGLRSLRYVEK</sequence>
<dbReference type="EMBL" id="AP009493">
    <property type="protein sequence ID" value="BAG21843.1"/>
    <property type="molecule type" value="Genomic_DNA"/>
</dbReference>
<dbReference type="RefSeq" id="WP_003969277.1">
    <property type="nucleotide sequence ID" value="NC_010572.1"/>
</dbReference>
<dbReference type="SMR" id="B1VY58"/>
<dbReference type="KEGG" id="sgr:SGR_5014"/>
<dbReference type="eggNOG" id="COG1381">
    <property type="taxonomic scope" value="Bacteria"/>
</dbReference>
<dbReference type="HOGENOM" id="CLU_066632_1_1_11"/>
<dbReference type="Proteomes" id="UP000001685">
    <property type="component" value="Chromosome"/>
</dbReference>
<dbReference type="GO" id="GO:0043590">
    <property type="term" value="C:bacterial nucleoid"/>
    <property type="evidence" value="ECO:0007669"/>
    <property type="project" value="TreeGrafter"/>
</dbReference>
<dbReference type="GO" id="GO:0006310">
    <property type="term" value="P:DNA recombination"/>
    <property type="evidence" value="ECO:0007669"/>
    <property type="project" value="UniProtKB-UniRule"/>
</dbReference>
<dbReference type="GO" id="GO:0006302">
    <property type="term" value="P:double-strand break repair"/>
    <property type="evidence" value="ECO:0007669"/>
    <property type="project" value="TreeGrafter"/>
</dbReference>
<dbReference type="Gene3D" id="2.40.50.140">
    <property type="entry name" value="Nucleic acid-binding proteins"/>
    <property type="match status" value="1"/>
</dbReference>
<dbReference type="Gene3D" id="1.20.1440.120">
    <property type="entry name" value="Recombination protein O, C-terminal domain"/>
    <property type="match status" value="1"/>
</dbReference>
<dbReference type="Gene3D" id="6.20.220.20">
    <property type="entry name" value="Recombination protein O, zinc-binding domain"/>
    <property type="match status" value="1"/>
</dbReference>
<dbReference type="HAMAP" id="MF_00201">
    <property type="entry name" value="RecO"/>
    <property type="match status" value="1"/>
</dbReference>
<dbReference type="InterPro" id="IPR037278">
    <property type="entry name" value="ARFGAP/RecO"/>
</dbReference>
<dbReference type="InterPro" id="IPR022572">
    <property type="entry name" value="DNA_rep/recomb_RecO_N"/>
</dbReference>
<dbReference type="InterPro" id="IPR012340">
    <property type="entry name" value="NA-bd_OB-fold"/>
</dbReference>
<dbReference type="InterPro" id="IPR003717">
    <property type="entry name" value="RecO"/>
</dbReference>
<dbReference type="InterPro" id="IPR042242">
    <property type="entry name" value="RecO_C"/>
</dbReference>
<dbReference type="NCBIfam" id="TIGR00613">
    <property type="entry name" value="reco"/>
    <property type="match status" value="1"/>
</dbReference>
<dbReference type="PANTHER" id="PTHR33991">
    <property type="entry name" value="DNA REPAIR PROTEIN RECO"/>
    <property type="match status" value="1"/>
</dbReference>
<dbReference type="PANTHER" id="PTHR33991:SF1">
    <property type="entry name" value="DNA REPAIR PROTEIN RECO"/>
    <property type="match status" value="1"/>
</dbReference>
<dbReference type="Pfam" id="PF02565">
    <property type="entry name" value="RecO_C"/>
    <property type="match status" value="1"/>
</dbReference>
<dbReference type="Pfam" id="PF11967">
    <property type="entry name" value="RecO_N"/>
    <property type="match status" value="1"/>
</dbReference>
<dbReference type="SUPFAM" id="SSF57863">
    <property type="entry name" value="ArfGap/RecO-like zinc finger"/>
    <property type="match status" value="1"/>
</dbReference>
<dbReference type="SUPFAM" id="SSF50249">
    <property type="entry name" value="Nucleic acid-binding proteins"/>
    <property type="match status" value="1"/>
</dbReference>
<keyword id="KW-0227">DNA damage</keyword>
<keyword id="KW-0233">DNA recombination</keyword>
<keyword id="KW-0234">DNA repair</keyword>
<name>RECO_STRGG</name>
<reference key="1">
    <citation type="journal article" date="2008" name="J. Bacteriol.">
        <title>Genome sequence of the streptomycin-producing microorganism Streptomyces griseus IFO 13350.</title>
        <authorList>
            <person name="Ohnishi Y."/>
            <person name="Ishikawa J."/>
            <person name="Hara H."/>
            <person name="Suzuki H."/>
            <person name="Ikenoya M."/>
            <person name="Ikeda H."/>
            <person name="Yamashita A."/>
            <person name="Hattori M."/>
            <person name="Horinouchi S."/>
        </authorList>
    </citation>
    <scope>NUCLEOTIDE SEQUENCE [LARGE SCALE GENOMIC DNA]</scope>
    <source>
        <strain>JCM 4626 / CBS 651.72 / NBRC 13350 / KCC S-0626 / ISP 5235</strain>
    </source>
</reference>
<accession>B1VY58</accession>
<comment type="function">
    <text evidence="1">Involved in DNA repair and RecF pathway recombination.</text>
</comment>
<comment type="similarity">
    <text evidence="1">Belongs to the RecO family.</text>
</comment>
<organism>
    <name type="scientific">Streptomyces griseus subsp. griseus (strain JCM 4626 / CBS 651.72 / NBRC 13350 / KCC S-0626 / ISP 5235)</name>
    <dbReference type="NCBI Taxonomy" id="455632"/>
    <lineage>
        <taxon>Bacteria</taxon>
        <taxon>Bacillati</taxon>
        <taxon>Actinomycetota</taxon>
        <taxon>Actinomycetes</taxon>
        <taxon>Kitasatosporales</taxon>
        <taxon>Streptomycetaceae</taxon>
        <taxon>Streptomyces</taxon>
    </lineage>
</organism>
<feature type="chain" id="PRO_1000099414" description="DNA repair protein RecO">
    <location>
        <begin position="1"/>
        <end position="248"/>
    </location>
</feature>
<gene>
    <name evidence="1" type="primary">recO</name>
    <name type="ordered locus">SGR_5014</name>
</gene>